<dbReference type="EC" id="2.1.1.173" evidence="1"/>
<dbReference type="EC" id="2.1.1.264" evidence="1"/>
<dbReference type="EMBL" id="CP000789">
    <property type="protein sequence ID" value="ABU71299.1"/>
    <property type="molecule type" value="Genomic_DNA"/>
</dbReference>
<dbReference type="RefSeq" id="WP_012128012.1">
    <property type="nucleotide sequence ID" value="NC_009783.1"/>
</dbReference>
<dbReference type="SMR" id="A7N0M8"/>
<dbReference type="KEGG" id="vha:VIBHAR_02337"/>
<dbReference type="PATRIC" id="fig|338187.25.peg.366"/>
<dbReference type="Proteomes" id="UP000008152">
    <property type="component" value="Chromosome I"/>
</dbReference>
<dbReference type="GO" id="GO:0005737">
    <property type="term" value="C:cytoplasm"/>
    <property type="evidence" value="ECO:0007669"/>
    <property type="project" value="UniProtKB-SubCell"/>
</dbReference>
<dbReference type="GO" id="GO:0052915">
    <property type="term" value="F:23S rRNA (guanine(2445)-N(2))-methyltransferase activity"/>
    <property type="evidence" value="ECO:0007669"/>
    <property type="project" value="UniProtKB-UniRule"/>
</dbReference>
<dbReference type="GO" id="GO:0003723">
    <property type="term" value="F:RNA binding"/>
    <property type="evidence" value="ECO:0007669"/>
    <property type="project" value="UniProtKB-KW"/>
</dbReference>
<dbReference type="GO" id="GO:0070043">
    <property type="term" value="F:rRNA (guanine-N7-)-methyltransferase activity"/>
    <property type="evidence" value="ECO:0007669"/>
    <property type="project" value="UniProtKB-UniRule"/>
</dbReference>
<dbReference type="CDD" id="cd02440">
    <property type="entry name" value="AdoMet_MTases"/>
    <property type="match status" value="1"/>
</dbReference>
<dbReference type="CDD" id="cd11715">
    <property type="entry name" value="THUMP_AdoMetMT"/>
    <property type="match status" value="1"/>
</dbReference>
<dbReference type="FunFam" id="3.30.750.80:FF:000001">
    <property type="entry name" value="Ribosomal RNA large subunit methyltransferase K/L"/>
    <property type="match status" value="1"/>
</dbReference>
<dbReference type="FunFam" id="3.40.50.150:FF:000039">
    <property type="entry name" value="Ribosomal RNA large subunit methyltransferase K/L"/>
    <property type="match status" value="1"/>
</dbReference>
<dbReference type="Gene3D" id="3.30.2130.30">
    <property type="match status" value="1"/>
</dbReference>
<dbReference type="Gene3D" id="3.30.750.80">
    <property type="entry name" value="RNA methyltransferase domain (HRMD) like"/>
    <property type="match status" value="1"/>
</dbReference>
<dbReference type="Gene3D" id="3.40.50.150">
    <property type="entry name" value="Vaccinia Virus protein VP39"/>
    <property type="match status" value="2"/>
</dbReference>
<dbReference type="HAMAP" id="MF_01858">
    <property type="entry name" value="23SrRNA_methyltr_KL"/>
    <property type="match status" value="1"/>
</dbReference>
<dbReference type="InterPro" id="IPR017244">
    <property type="entry name" value="23SrRNA_methyltr_KL"/>
</dbReference>
<dbReference type="InterPro" id="IPR002052">
    <property type="entry name" value="DNA_methylase_N6_adenine_CS"/>
</dbReference>
<dbReference type="InterPro" id="IPR000241">
    <property type="entry name" value="RlmKL-like_Mtase"/>
</dbReference>
<dbReference type="InterPro" id="IPR053943">
    <property type="entry name" value="RlmKL-like_Mtase_CS"/>
</dbReference>
<dbReference type="InterPro" id="IPR054170">
    <property type="entry name" value="RlmL_1st"/>
</dbReference>
<dbReference type="InterPro" id="IPR019614">
    <property type="entry name" value="SAM-dep_methyl-trfase"/>
</dbReference>
<dbReference type="InterPro" id="IPR029063">
    <property type="entry name" value="SAM-dependent_MTases_sf"/>
</dbReference>
<dbReference type="InterPro" id="IPR004114">
    <property type="entry name" value="THUMP_dom"/>
</dbReference>
<dbReference type="NCBIfam" id="NF008748">
    <property type="entry name" value="PRK11783.1"/>
    <property type="match status" value="1"/>
</dbReference>
<dbReference type="PANTHER" id="PTHR47313">
    <property type="entry name" value="RIBOSOMAL RNA LARGE SUBUNIT METHYLTRANSFERASE K/L"/>
    <property type="match status" value="1"/>
</dbReference>
<dbReference type="PANTHER" id="PTHR47313:SF1">
    <property type="entry name" value="RIBOSOMAL RNA LARGE SUBUNIT METHYLTRANSFERASE K_L"/>
    <property type="match status" value="1"/>
</dbReference>
<dbReference type="Pfam" id="PF10672">
    <property type="entry name" value="Methyltrans_SAM"/>
    <property type="match status" value="1"/>
</dbReference>
<dbReference type="Pfam" id="PF22020">
    <property type="entry name" value="RlmL_1st"/>
    <property type="match status" value="1"/>
</dbReference>
<dbReference type="Pfam" id="PF02926">
    <property type="entry name" value="THUMP"/>
    <property type="match status" value="1"/>
</dbReference>
<dbReference type="Pfam" id="PF01170">
    <property type="entry name" value="UPF0020"/>
    <property type="match status" value="1"/>
</dbReference>
<dbReference type="PIRSF" id="PIRSF037618">
    <property type="entry name" value="RNA_Mtase_bacteria_prd"/>
    <property type="match status" value="1"/>
</dbReference>
<dbReference type="PRINTS" id="PR00507">
    <property type="entry name" value="N12N6MTFRASE"/>
</dbReference>
<dbReference type="SMART" id="SM00981">
    <property type="entry name" value="THUMP"/>
    <property type="match status" value="1"/>
</dbReference>
<dbReference type="SUPFAM" id="SSF53335">
    <property type="entry name" value="S-adenosyl-L-methionine-dependent methyltransferases"/>
    <property type="match status" value="2"/>
</dbReference>
<dbReference type="PROSITE" id="PS51165">
    <property type="entry name" value="THUMP"/>
    <property type="match status" value="1"/>
</dbReference>
<dbReference type="PROSITE" id="PS01261">
    <property type="entry name" value="UPF0020"/>
    <property type="match status" value="1"/>
</dbReference>
<feature type="chain" id="PRO_0000366850" description="Ribosomal RNA large subunit methyltransferase K/L">
    <location>
        <begin position="1"/>
        <end position="707"/>
    </location>
</feature>
<feature type="domain" description="THUMP" evidence="1">
    <location>
        <begin position="43"/>
        <end position="154"/>
    </location>
</feature>
<evidence type="ECO:0000255" key="1">
    <source>
        <dbReference type="HAMAP-Rule" id="MF_01858"/>
    </source>
</evidence>
<keyword id="KW-0963">Cytoplasm</keyword>
<keyword id="KW-0489">Methyltransferase</keyword>
<keyword id="KW-0694">RNA-binding</keyword>
<keyword id="KW-0698">rRNA processing</keyword>
<keyword id="KW-0949">S-adenosyl-L-methionine</keyword>
<keyword id="KW-0808">Transferase</keyword>
<sequence>MNQYLAVTSNGMENLLAEELTKLGIENAKPVQAGVKFKATNEQIYRCCLWSRLASRFVRVLSEFTCNDDMDLYLSTSSINWVNQFHSSKRFVVDFNGTNREIRNSQYGAMKVKDGIVDCFEKKGLPRPNISKERPDIRVHVRLHKDKAILGVDMVGSGLHQRGYRPESGRAPLRETLAAAIVMRCGWDGSQPLLDPMCGSGTLLIEAAMMAANMAPGVKRKQWGFEALEDFEPELWAEIKSEANVQARRGVKKVDAKFFGFDNDPNVLKVAQDNARRAGVEELITFAQGDAATITRPAGFEAGVIVSNPPYGERLGTEPGLIALYTAFGGQLKAEFGGCKASIFSSSDELLSCLRMRADKQFKLNNGALPCHQKNYSIAERSADEVKGADTNVQIAPDFSNRLKKNIGKIGKWARKEKLDCYRIYDADLPEYNVAIDVYGDQIVIQEYAAPKNIPEEKAKRRLTDIIRATIQVTGVEANKVVLKVREKQKGLSQYQKLGQVSETLEVNEYGVKLIVNLHDYLDTGLFLDHKITRRRLGEMAQGKDFLNLFAYTGSATVHAAVGGARSTTTVDMSNTYLNWAKDNMQLNGCVGRQHRFEQADCLQWLENAKGEYDLIFIDPPTFSNSKRMETSFDVQRDHIKLMTNLKRLLRAGGAIVFSNNKRHFKMDEAGLAELGLKAQNISSQTLPLDFSRNKQIHNCWLVTHAE</sequence>
<gene>
    <name evidence="1" type="primary">rlmL</name>
    <name type="ordered locus">VIBHAR_02337</name>
</gene>
<reference key="1">
    <citation type="submission" date="2007-08" db="EMBL/GenBank/DDBJ databases">
        <authorList>
            <consortium name="The Vibrio harveyi Genome Sequencing Project"/>
            <person name="Bassler B."/>
            <person name="Clifton S.W."/>
            <person name="Fulton L."/>
            <person name="Delehaunty K."/>
            <person name="Fronick C."/>
            <person name="Harrison M."/>
            <person name="Markivic C."/>
            <person name="Fulton R."/>
            <person name="Tin-Wollam A.-M."/>
            <person name="Shah N."/>
            <person name="Pepin K."/>
            <person name="Nash W."/>
            <person name="Thiruvilangam P."/>
            <person name="Bhonagiri V."/>
            <person name="Waters C."/>
            <person name="Tu K.C."/>
            <person name="Irgon J."/>
            <person name="Wilson R.K."/>
        </authorList>
    </citation>
    <scope>NUCLEOTIDE SEQUENCE [LARGE SCALE GENOMIC DNA]</scope>
    <source>
        <strain>ATCC BAA-1116 / BB120</strain>
    </source>
</reference>
<protein>
    <recommendedName>
        <fullName evidence="1">Ribosomal RNA large subunit methyltransferase K/L</fullName>
    </recommendedName>
    <domain>
        <recommendedName>
            <fullName evidence="1">23S rRNA m2G2445 methyltransferase</fullName>
            <ecNumber evidence="1">2.1.1.173</ecNumber>
        </recommendedName>
        <alternativeName>
            <fullName evidence="1">rRNA (guanine-N(2)-)-methyltransferase RlmL</fullName>
        </alternativeName>
    </domain>
    <domain>
        <recommendedName>
            <fullName evidence="1">23S rRNA m7G2069 methyltransferase</fullName>
            <ecNumber evidence="1">2.1.1.264</ecNumber>
        </recommendedName>
        <alternativeName>
            <fullName evidence="1">rRNA (guanine-N(7)-)-methyltransferase RlmK</fullName>
        </alternativeName>
    </domain>
</protein>
<accession>A7N0M8</accession>
<proteinExistence type="inferred from homology"/>
<comment type="function">
    <text evidence="1">Specifically methylates the guanine in position 2445 (m2G2445) and the guanine in position 2069 (m7G2069) of 23S rRNA.</text>
</comment>
<comment type="catalytic activity">
    <reaction evidence="1">
        <text>guanosine(2445) in 23S rRNA + S-adenosyl-L-methionine = N(2)-methylguanosine(2445) in 23S rRNA + S-adenosyl-L-homocysteine + H(+)</text>
        <dbReference type="Rhea" id="RHEA:42740"/>
        <dbReference type="Rhea" id="RHEA-COMP:10215"/>
        <dbReference type="Rhea" id="RHEA-COMP:10216"/>
        <dbReference type="ChEBI" id="CHEBI:15378"/>
        <dbReference type="ChEBI" id="CHEBI:57856"/>
        <dbReference type="ChEBI" id="CHEBI:59789"/>
        <dbReference type="ChEBI" id="CHEBI:74269"/>
        <dbReference type="ChEBI" id="CHEBI:74481"/>
        <dbReference type="EC" id="2.1.1.173"/>
    </reaction>
</comment>
<comment type="catalytic activity">
    <reaction evidence="1">
        <text>guanosine(2069) in 23S rRNA + S-adenosyl-L-methionine = N(2)-methylguanosine(2069) in 23S rRNA + S-adenosyl-L-homocysteine + H(+)</text>
        <dbReference type="Rhea" id="RHEA:43772"/>
        <dbReference type="Rhea" id="RHEA-COMP:10688"/>
        <dbReference type="Rhea" id="RHEA-COMP:10689"/>
        <dbReference type="ChEBI" id="CHEBI:15378"/>
        <dbReference type="ChEBI" id="CHEBI:57856"/>
        <dbReference type="ChEBI" id="CHEBI:59789"/>
        <dbReference type="ChEBI" id="CHEBI:74269"/>
        <dbReference type="ChEBI" id="CHEBI:74481"/>
        <dbReference type="EC" id="2.1.1.264"/>
    </reaction>
</comment>
<comment type="subcellular location">
    <subcellularLocation>
        <location evidence="1">Cytoplasm</location>
    </subcellularLocation>
</comment>
<comment type="similarity">
    <text evidence="1">Belongs to the methyltransferase superfamily. RlmKL family.</text>
</comment>
<name>RLMKL_VIBC1</name>
<organism>
    <name type="scientific">Vibrio campbellii (strain ATCC BAA-1116)</name>
    <dbReference type="NCBI Taxonomy" id="2902295"/>
    <lineage>
        <taxon>Bacteria</taxon>
        <taxon>Pseudomonadati</taxon>
        <taxon>Pseudomonadota</taxon>
        <taxon>Gammaproteobacteria</taxon>
        <taxon>Vibrionales</taxon>
        <taxon>Vibrionaceae</taxon>
        <taxon>Vibrio</taxon>
    </lineage>
</organism>